<protein>
    <recommendedName>
        <fullName evidence="1">ATP synthase subunit delta, chloroplastic</fullName>
    </recommendedName>
    <alternativeName>
        <fullName evidence="1">ATP synthase F(1) sector subunit delta</fullName>
    </alternativeName>
    <alternativeName>
        <fullName evidence="1">F-type ATPase subunit delta</fullName>
    </alternativeName>
</protein>
<reference key="1">
    <citation type="journal article" date="2004" name="J. Mol. Evol.">
        <title>Comparative analysis of the complete plastid genome sequence of the red alga Gracilaria tenuistipitata var. liui provides insights into the evolution of rhodoplasts and their relationship to other plastids.</title>
        <authorList>
            <person name="Hagopian J.C."/>
            <person name="Reis M."/>
            <person name="Kitajima J.P."/>
            <person name="Bhattacharya D."/>
            <person name="de Oliveira M.C."/>
        </authorList>
    </citation>
    <scope>NUCLEOTIDE SEQUENCE [LARGE SCALE GENOMIC DNA]</scope>
</reference>
<dbReference type="EMBL" id="AY673996">
    <property type="protein sequence ID" value="AAT79726.1"/>
    <property type="molecule type" value="Genomic_DNA"/>
</dbReference>
<dbReference type="RefSeq" id="YP_063651.1">
    <property type="nucleotide sequence ID" value="NC_006137.1"/>
</dbReference>
<dbReference type="SMR" id="Q6B8Q9"/>
<dbReference type="GeneID" id="2944107"/>
<dbReference type="GO" id="GO:0009535">
    <property type="term" value="C:chloroplast thylakoid membrane"/>
    <property type="evidence" value="ECO:0007669"/>
    <property type="project" value="UniProtKB-SubCell"/>
</dbReference>
<dbReference type="GO" id="GO:0045259">
    <property type="term" value="C:proton-transporting ATP synthase complex"/>
    <property type="evidence" value="ECO:0007669"/>
    <property type="project" value="UniProtKB-KW"/>
</dbReference>
<dbReference type="GO" id="GO:0046933">
    <property type="term" value="F:proton-transporting ATP synthase activity, rotational mechanism"/>
    <property type="evidence" value="ECO:0007669"/>
    <property type="project" value="UniProtKB-UniRule"/>
</dbReference>
<dbReference type="Gene3D" id="1.10.520.20">
    <property type="entry name" value="N-terminal domain of the delta subunit of the F1F0-ATP synthase"/>
    <property type="match status" value="1"/>
</dbReference>
<dbReference type="HAMAP" id="MF_01416">
    <property type="entry name" value="ATP_synth_delta_bact"/>
    <property type="match status" value="1"/>
</dbReference>
<dbReference type="InterPro" id="IPR026015">
    <property type="entry name" value="ATP_synth_OSCP/delta_N_sf"/>
</dbReference>
<dbReference type="InterPro" id="IPR020781">
    <property type="entry name" value="ATPase_OSCP/d_CS"/>
</dbReference>
<dbReference type="InterPro" id="IPR000711">
    <property type="entry name" value="ATPase_OSCP/dsu"/>
</dbReference>
<dbReference type="NCBIfam" id="TIGR01145">
    <property type="entry name" value="ATP_synt_delta"/>
    <property type="match status" value="1"/>
</dbReference>
<dbReference type="PANTHER" id="PTHR11910">
    <property type="entry name" value="ATP SYNTHASE DELTA CHAIN"/>
    <property type="match status" value="1"/>
</dbReference>
<dbReference type="Pfam" id="PF00213">
    <property type="entry name" value="OSCP"/>
    <property type="match status" value="1"/>
</dbReference>
<dbReference type="PRINTS" id="PR00125">
    <property type="entry name" value="ATPASEDELTA"/>
</dbReference>
<dbReference type="SUPFAM" id="SSF47928">
    <property type="entry name" value="N-terminal domain of the delta subunit of the F1F0-ATP synthase"/>
    <property type="match status" value="1"/>
</dbReference>
<dbReference type="PROSITE" id="PS00389">
    <property type="entry name" value="ATPASE_DELTA"/>
    <property type="match status" value="1"/>
</dbReference>
<feature type="chain" id="PRO_0000371213" description="ATP synthase subunit delta, chloroplastic">
    <location>
        <begin position="1"/>
        <end position="185"/>
    </location>
</feature>
<geneLocation type="chloroplast"/>
<proteinExistence type="inferred from homology"/>
<comment type="function">
    <text evidence="1">F(1)F(0) ATP synthase produces ATP from ADP in the presence of a proton or sodium gradient. F-type ATPases consist of two structural domains, F(1) containing the extramembraneous catalytic core and F(0) containing the membrane proton channel, linked together by a central stalk and a peripheral stalk. During catalysis, ATP synthesis in the catalytic domain of F(1) is coupled via a rotary mechanism of the central stalk subunits to proton translocation.</text>
</comment>
<comment type="function">
    <text evidence="1">This protein is part of the stalk that links CF(0) to CF(1). It either transmits conformational changes from CF(0) to CF(1) or is implicated in proton conduction.</text>
</comment>
<comment type="subunit">
    <text evidence="1">F-type ATPases have 2 components, F(1) - the catalytic core - and F(0) - the membrane proton channel. F(1) has five subunits: alpha(3), beta(3), gamma(1), delta(1), epsilon(1). CF(0) has four main subunits: a(1), b(1), b'(1) and c(10-14). The alpha and beta chains form an alternating ring which encloses part of the gamma chain. F(1) is attached to F(0) by a central stalk formed by the gamma and epsilon chains, while a peripheral stalk is formed by the delta, b and b' chains.</text>
</comment>
<comment type="subcellular location">
    <subcellularLocation>
        <location evidence="1">Plastid</location>
        <location evidence="1">Chloroplast thylakoid membrane</location>
        <topology evidence="1">Peripheral membrane protein</topology>
    </subcellularLocation>
</comment>
<comment type="similarity">
    <text evidence="1">Belongs to the ATPase delta chain family.</text>
</comment>
<gene>
    <name evidence="1" type="primary">atpD</name>
    <name type="ordered locus">Grc000145</name>
</gene>
<evidence type="ECO:0000255" key="1">
    <source>
        <dbReference type="HAMAP-Rule" id="MF_01416"/>
    </source>
</evidence>
<organism>
    <name type="scientific">Gracilaria tenuistipitata var. liui</name>
    <name type="common">Red alga</name>
    <dbReference type="NCBI Taxonomy" id="285951"/>
    <lineage>
        <taxon>Eukaryota</taxon>
        <taxon>Rhodophyta</taxon>
        <taxon>Florideophyceae</taxon>
        <taxon>Rhodymeniophycidae</taxon>
        <taxon>Gracilariales</taxon>
        <taxon>Gracilariaceae</taxon>
        <taxon>Gracilaria</taxon>
        <taxon>Gracilaria tenuistipitata</taxon>
    </lineage>
</organism>
<name>ATPD_GRATL</name>
<keyword id="KW-0066">ATP synthesis</keyword>
<keyword id="KW-0139">CF(1)</keyword>
<keyword id="KW-0150">Chloroplast</keyword>
<keyword id="KW-0375">Hydrogen ion transport</keyword>
<keyword id="KW-0406">Ion transport</keyword>
<keyword id="KW-0472">Membrane</keyword>
<keyword id="KW-0934">Plastid</keyword>
<keyword id="KW-0793">Thylakoid</keyword>
<keyword id="KW-0813">Transport</keyword>
<sequence length="185" mass="20573">MSSQGFMSKIALPYAEALVESASSASALDQINQDLSLISEILNQSQELKTFFYNPLITTEIKKNVVSSLFTNQVHSLVIRFLLVLIDRRRIALLDVIISKYLELVYQLQSTVIAEVLTPVLLTDVQQSALINKIKDMTNSKTVKLVITIKPMLIAGFIIKIGSKTIDTSLYGRLKHISAYLNAVS</sequence>
<accession>Q6B8Q9</accession>